<proteinExistence type="inferred from homology"/>
<protein>
    <recommendedName>
        <fullName evidence="1">Protein ApaG</fullName>
    </recommendedName>
</protein>
<sequence>MDVSQPRIQIQVHTKYVEEQSNPELARYIFAYIITIKNHSSESVQLLSRRWLITDANGKQISVEGDGVVGQQPFIDAGDEYTYSSGTALDTPVGVMQGQYIMHDAQGKEFVVEIEPFRLAVPNILN</sequence>
<feature type="chain" id="PRO_0000197968" description="Protein ApaG">
    <location>
        <begin position="1"/>
        <end position="126"/>
    </location>
</feature>
<feature type="domain" description="ApaG" evidence="1">
    <location>
        <begin position="2"/>
        <end position="126"/>
    </location>
</feature>
<dbReference type="EMBL" id="BA000037">
    <property type="protein sequence ID" value="BAC93241.1"/>
    <property type="molecule type" value="Genomic_DNA"/>
</dbReference>
<dbReference type="RefSeq" id="WP_011078743.1">
    <property type="nucleotide sequence ID" value="NC_005139.1"/>
</dbReference>
<dbReference type="SMR" id="Q7MP87"/>
<dbReference type="STRING" id="672.VV93_v1c04440"/>
<dbReference type="GeneID" id="93894971"/>
<dbReference type="KEGG" id="vvy:VV0477"/>
<dbReference type="eggNOG" id="COG2967">
    <property type="taxonomic scope" value="Bacteria"/>
</dbReference>
<dbReference type="HOGENOM" id="CLU_128074_0_0_6"/>
<dbReference type="Proteomes" id="UP000002675">
    <property type="component" value="Chromosome I"/>
</dbReference>
<dbReference type="GO" id="GO:0070987">
    <property type="term" value="P:error-free translesion synthesis"/>
    <property type="evidence" value="ECO:0007669"/>
    <property type="project" value="TreeGrafter"/>
</dbReference>
<dbReference type="Gene3D" id="2.60.40.1470">
    <property type="entry name" value="ApaG domain"/>
    <property type="match status" value="1"/>
</dbReference>
<dbReference type="HAMAP" id="MF_00791">
    <property type="entry name" value="ApaG"/>
    <property type="match status" value="1"/>
</dbReference>
<dbReference type="InterPro" id="IPR007474">
    <property type="entry name" value="ApaG_domain"/>
</dbReference>
<dbReference type="InterPro" id="IPR036767">
    <property type="entry name" value="ApaG_sf"/>
</dbReference>
<dbReference type="InterPro" id="IPR023065">
    <property type="entry name" value="Uncharacterised_ApaG"/>
</dbReference>
<dbReference type="NCBIfam" id="NF003967">
    <property type="entry name" value="PRK05461.1"/>
    <property type="match status" value="1"/>
</dbReference>
<dbReference type="PANTHER" id="PTHR14289">
    <property type="entry name" value="F-BOX ONLY PROTEIN 3"/>
    <property type="match status" value="1"/>
</dbReference>
<dbReference type="PANTHER" id="PTHR14289:SF16">
    <property type="entry name" value="POLYMERASE DELTA-INTERACTING PROTEIN 2"/>
    <property type="match status" value="1"/>
</dbReference>
<dbReference type="Pfam" id="PF04379">
    <property type="entry name" value="DUF525"/>
    <property type="match status" value="1"/>
</dbReference>
<dbReference type="SUPFAM" id="SSF110069">
    <property type="entry name" value="ApaG-like"/>
    <property type="match status" value="1"/>
</dbReference>
<dbReference type="PROSITE" id="PS51087">
    <property type="entry name" value="APAG"/>
    <property type="match status" value="1"/>
</dbReference>
<gene>
    <name evidence="1" type="primary">apaG</name>
    <name type="ordered locus">VV0477</name>
</gene>
<organism>
    <name type="scientific">Vibrio vulnificus (strain YJ016)</name>
    <dbReference type="NCBI Taxonomy" id="196600"/>
    <lineage>
        <taxon>Bacteria</taxon>
        <taxon>Pseudomonadati</taxon>
        <taxon>Pseudomonadota</taxon>
        <taxon>Gammaproteobacteria</taxon>
        <taxon>Vibrionales</taxon>
        <taxon>Vibrionaceae</taxon>
        <taxon>Vibrio</taxon>
    </lineage>
</organism>
<reference key="1">
    <citation type="journal article" date="2003" name="Genome Res.">
        <title>Comparative genome analysis of Vibrio vulnificus, a marine pathogen.</title>
        <authorList>
            <person name="Chen C.-Y."/>
            <person name="Wu K.-M."/>
            <person name="Chang Y.-C."/>
            <person name="Chang C.-H."/>
            <person name="Tsai H.-C."/>
            <person name="Liao T.-L."/>
            <person name="Liu Y.-M."/>
            <person name="Chen H.-J."/>
            <person name="Shen A.B.-T."/>
            <person name="Li J.-C."/>
            <person name="Su T.-L."/>
            <person name="Shao C.-P."/>
            <person name="Lee C.-T."/>
            <person name="Hor L.-I."/>
            <person name="Tsai S.-F."/>
        </authorList>
    </citation>
    <scope>NUCLEOTIDE SEQUENCE [LARGE SCALE GENOMIC DNA]</scope>
    <source>
        <strain>YJ016</strain>
    </source>
</reference>
<name>APAG_VIBVY</name>
<accession>Q7MP87</accession>
<evidence type="ECO:0000255" key="1">
    <source>
        <dbReference type="HAMAP-Rule" id="MF_00791"/>
    </source>
</evidence>